<accession>P43453</accession>
<accession>I6T798</accession>
<dbReference type="EMBL" id="M90060">
    <property type="protein sequence ID" value="AAA26860.1"/>
    <property type="molecule type" value="Genomic_DNA"/>
</dbReference>
<dbReference type="EMBL" id="CP003504">
    <property type="protein sequence ID" value="AFM70626.1"/>
    <property type="molecule type" value="Genomic_DNA"/>
</dbReference>
<dbReference type="PIR" id="F43259">
    <property type="entry name" value="F43259"/>
</dbReference>
<dbReference type="RefSeq" id="WP_010737985.1">
    <property type="nucleotide sequence ID" value="NZ_KB946231.1"/>
</dbReference>
<dbReference type="SMR" id="P43453"/>
<dbReference type="KEGG" id="ehr:EHR_08505"/>
<dbReference type="eggNOG" id="COG0355">
    <property type="taxonomic scope" value="Bacteria"/>
</dbReference>
<dbReference type="HOGENOM" id="CLU_084338_1_0_9"/>
<dbReference type="OrthoDB" id="9804110at2"/>
<dbReference type="Proteomes" id="UP000002895">
    <property type="component" value="Chromosome"/>
</dbReference>
<dbReference type="GO" id="GO:0005886">
    <property type="term" value="C:plasma membrane"/>
    <property type="evidence" value="ECO:0007669"/>
    <property type="project" value="UniProtKB-SubCell"/>
</dbReference>
<dbReference type="GO" id="GO:0045259">
    <property type="term" value="C:proton-transporting ATP synthase complex"/>
    <property type="evidence" value="ECO:0007669"/>
    <property type="project" value="UniProtKB-KW"/>
</dbReference>
<dbReference type="GO" id="GO:0005524">
    <property type="term" value="F:ATP binding"/>
    <property type="evidence" value="ECO:0007669"/>
    <property type="project" value="UniProtKB-UniRule"/>
</dbReference>
<dbReference type="GO" id="GO:0046933">
    <property type="term" value="F:proton-transporting ATP synthase activity, rotational mechanism"/>
    <property type="evidence" value="ECO:0007669"/>
    <property type="project" value="UniProtKB-UniRule"/>
</dbReference>
<dbReference type="CDD" id="cd12152">
    <property type="entry name" value="F1-ATPase_delta"/>
    <property type="match status" value="1"/>
</dbReference>
<dbReference type="Gene3D" id="1.20.5.440">
    <property type="entry name" value="ATP synthase delta/epsilon subunit, C-terminal domain"/>
    <property type="match status" value="1"/>
</dbReference>
<dbReference type="Gene3D" id="2.60.15.10">
    <property type="entry name" value="F0F1 ATP synthase delta/epsilon subunit, N-terminal"/>
    <property type="match status" value="1"/>
</dbReference>
<dbReference type="HAMAP" id="MF_00530">
    <property type="entry name" value="ATP_synth_epsil_bac"/>
    <property type="match status" value="1"/>
</dbReference>
<dbReference type="InterPro" id="IPR036794">
    <property type="entry name" value="ATP_F1_dsu/esu_C_sf"/>
</dbReference>
<dbReference type="InterPro" id="IPR001469">
    <property type="entry name" value="ATP_synth_F1_dsu/esu"/>
</dbReference>
<dbReference type="InterPro" id="IPR020546">
    <property type="entry name" value="ATP_synth_F1_dsu/esu_N"/>
</dbReference>
<dbReference type="InterPro" id="IPR020547">
    <property type="entry name" value="ATP_synth_F1_esu_C"/>
</dbReference>
<dbReference type="InterPro" id="IPR036771">
    <property type="entry name" value="ATPsynth_dsu/esu_N"/>
</dbReference>
<dbReference type="NCBIfam" id="TIGR01216">
    <property type="entry name" value="ATP_synt_epsi"/>
    <property type="match status" value="1"/>
</dbReference>
<dbReference type="NCBIfam" id="NF001846">
    <property type="entry name" value="PRK00571.1-3"/>
    <property type="match status" value="1"/>
</dbReference>
<dbReference type="PANTHER" id="PTHR13822">
    <property type="entry name" value="ATP SYNTHASE DELTA/EPSILON CHAIN"/>
    <property type="match status" value="1"/>
</dbReference>
<dbReference type="PANTHER" id="PTHR13822:SF10">
    <property type="entry name" value="ATP SYNTHASE EPSILON CHAIN, CHLOROPLASTIC"/>
    <property type="match status" value="1"/>
</dbReference>
<dbReference type="Pfam" id="PF00401">
    <property type="entry name" value="ATP-synt_DE"/>
    <property type="match status" value="1"/>
</dbReference>
<dbReference type="Pfam" id="PF02823">
    <property type="entry name" value="ATP-synt_DE_N"/>
    <property type="match status" value="1"/>
</dbReference>
<dbReference type="SUPFAM" id="SSF46604">
    <property type="entry name" value="Epsilon subunit of F1F0-ATP synthase C-terminal domain"/>
    <property type="match status" value="1"/>
</dbReference>
<dbReference type="SUPFAM" id="SSF51344">
    <property type="entry name" value="Epsilon subunit of F1F0-ATP synthase N-terminal domain"/>
    <property type="match status" value="1"/>
</dbReference>
<keyword id="KW-0066">ATP synthesis</keyword>
<keyword id="KW-1003">Cell membrane</keyword>
<keyword id="KW-0139">CF(1)</keyword>
<keyword id="KW-0375">Hydrogen ion transport</keyword>
<keyword id="KW-0406">Ion transport</keyword>
<keyword id="KW-0472">Membrane</keyword>
<keyword id="KW-0813">Transport</keyword>
<gene>
    <name type="primary">atpC</name>
    <name type="ordered locus">EHR_08505</name>
</gene>
<feature type="chain" id="PRO_0000188136" description="ATP synthase epsilon chain">
    <location>
        <begin position="1"/>
        <end position="140"/>
    </location>
</feature>
<proteinExistence type="inferred from homology"/>
<evidence type="ECO:0000250" key="1"/>
<evidence type="ECO:0000305" key="2"/>
<protein>
    <recommendedName>
        <fullName>ATP synthase epsilon chain</fullName>
    </recommendedName>
    <alternativeName>
        <fullName>ATP synthase F1 sector epsilon subunit</fullName>
    </alternativeName>
    <alternativeName>
        <fullName>F-ATPase epsilon subunit</fullName>
    </alternativeName>
</protein>
<sequence length="140" mass="15606">MDQYLTVNVVTPDGLVYDHHAAIVVARTTAGEIGILPKHAPIIVPLTIDEVRVKRTDSDTHVDWIAVNGGIMEVRDNVVSIVADSAERERDIDVSRAERAKQRAERQIAEAKEKEDTNELKRATVALHRAINRIKVSKHS</sequence>
<comment type="function">
    <text evidence="1">Produces ATP from ADP in the presence of a proton gradient across the membrane.</text>
</comment>
<comment type="subunit">
    <text>F-type ATPases have 2 components, CF(1) - the catalytic core - and CF(0) - the membrane proton channel. CF(1) has five subunits: alpha(3), beta(3), gamma(1), delta(1), epsilon(1). CF(0) has three main subunits: a, b and c.</text>
</comment>
<comment type="subcellular location">
    <subcellularLocation>
        <location evidence="1">Cell membrane</location>
        <topology evidence="1">Peripheral membrane protein</topology>
    </subcellularLocation>
</comment>
<comment type="similarity">
    <text evidence="2">Belongs to the ATPase epsilon chain family.</text>
</comment>
<reference key="1">
    <citation type="journal article" date="1992" name="J. Bacteriol.">
        <title>Gene structure of Enterococcus hirae (Streptococcus faecalis) F1F0-ATPase, which functions as a regulator of cytoplasmic pH.</title>
        <authorList>
            <person name="Shibata C."/>
            <person name="Ehara T."/>
            <person name="Tomura K."/>
            <person name="Igarashi K."/>
            <person name="Kobayashi H."/>
        </authorList>
    </citation>
    <scope>NUCLEOTIDE SEQUENCE [GENOMIC DNA]</scope>
    <source>
        <strain>ATCC 9790 / DSM 20160 / JCM 8729 / LMG 6399 / NBRC 3181 / NCIMB 6459 / NCDO 1258 / NCTC 12367 / WDCM 00089 / R</strain>
    </source>
</reference>
<reference key="2">
    <citation type="journal article" date="2012" name="J. Bacteriol.">
        <title>Genome sequence of Enterococcus hirae (Streptococcus faecalis) ATCC 9790, a model organism for the study of ion transport, bioenergetics, and copper homeostasis.</title>
        <authorList>
            <person name="Gaechter T."/>
            <person name="Wunderlin C."/>
            <person name="Schmidheini T."/>
            <person name="Solioz M."/>
        </authorList>
    </citation>
    <scope>NUCLEOTIDE SEQUENCE [LARGE SCALE GENOMIC DNA]</scope>
    <source>
        <strain>ATCC 9790 / DSM 20160 / JCM 8729 / LMG 6399 / NBRC 3181 / NCIMB 6459 / NCDO 1258 / NCTC 12367 / WDCM 00089 / R</strain>
    </source>
</reference>
<organism>
    <name type="scientific">Enterococcus hirae (strain ATCC 9790 / DSM 20160 / JCM 8729 / LMG 6399 / NBRC 3181 / NCIMB 6459 / NCDO 1258 / NCTC 12367 / WDCM 00089 / R)</name>
    <dbReference type="NCBI Taxonomy" id="768486"/>
    <lineage>
        <taxon>Bacteria</taxon>
        <taxon>Bacillati</taxon>
        <taxon>Bacillota</taxon>
        <taxon>Bacilli</taxon>
        <taxon>Lactobacillales</taxon>
        <taxon>Enterococcaceae</taxon>
        <taxon>Enterococcus</taxon>
    </lineage>
</organism>
<name>ATPE_ENTHA</name>